<accession>B7MMW1</accession>
<dbReference type="EC" id="1.1.1.38" evidence="1"/>
<dbReference type="EMBL" id="CU928161">
    <property type="protein sequence ID" value="CAR02889.1"/>
    <property type="molecule type" value="Genomic_DNA"/>
</dbReference>
<dbReference type="RefSeq" id="WP_000433462.1">
    <property type="nucleotide sequence ID" value="NC_011742.1"/>
</dbReference>
<dbReference type="SMR" id="B7MMW1"/>
<dbReference type="KEGG" id="ecz:ECS88_1573"/>
<dbReference type="HOGENOM" id="CLU_011405_5_2_6"/>
<dbReference type="Proteomes" id="UP000000747">
    <property type="component" value="Chromosome"/>
</dbReference>
<dbReference type="GO" id="GO:0005829">
    <property type="term" value="C:cytosol"/>
    <property type="evidence" value="ECO:0007669"/>
    <property type="project" value="TreeGrafter"/>
</dbReference>
<dbReference type="GO" id="GO:0004471">
    <property type="term" value="F:malate dehydrogenase (decarboxylating) (NAD+) activity"/>
    <property type="evidence" value="ECO:0007669"/>
    <property type="project" value="UniProtKB-UniRule"/>
</dbReference>
<dbReference type="GO" id="GO:0046872">
    <property type="term" value="F:metal ion binding"/>
    <property type="evidence" value="ECO:0007669"/>
    <property type="project" value="UniProtKB-KW"/>
</dbReference>
<dbReference type="GO" id="GO:0051287">
    <property type="term" value="F:NAD binding"/>
    <property type="evidence" value="ECO:0007669"/>
    <property type="project" value="InterPro"/>
</dbReference>
<dbReference type="GO" id="GO:0008948">
    <property type="term" value="F:oxaloacetate decarboxylase activity"/>
    <property type="evidence" value="ECO:0007669"/>
    <property type="project" value="UniProtKB-UniRule"/>
</dbReference>
<dbReference type="GO" id="GO:0006108">
    <property type="term" value="P:malate metabolic process"/>
    <property type="evidence" value="ECO:0007669"/>
    <property type="project" value="TreeGrafter"/>
</dbReference>
<dbReference type="CDD" id="cd05312">
    <property type="entry name" value="NAD_bind_1_malic_enz"/>
    <property type="match status" value="1"/>
</dbReference>
<dbReference type="FunFam" id="3.40.50.10380:FF:000001">
    <property type="entry name" value="NAD-dependent malic enzyme"/>
    <property type="match status" value="1"/>
</dbReference>
<dbReference type="FunFam" id="3.40.50.720:FF:000055">
    <property type="entry name" value="NAD-dependent malic enzyme"/>
    <property type="match status" value="1"/>
</dbReference>
<dbReference type="Gene3D" id="3.40.50.10380">
    <property type="entry name" value="Malic enzyme, N-terminal domain"/>
    <property type="match status" value="1"/>
</dbReference>
<dbReference type="Gene3D" id="3.40.50.720">
    <property type="entry name" value="NAD(P)-binding Rossmann-like Domain"/>
    <property type="match status" value="1"/>
</dbReference>
<dbReference type="HAMAP" id="MF_01619">
    <property type="entry name" value="NAD_malic_enz"/>
    <property type="match status" value="1"/>
</dbReference>
<dbReference type="InterPro" id="IPR046346">
    <property type="entry name" value="Aminoacid_DH-like_N_sf"/>
</dbReference>
<dbReference type="InterPro" id="IPR015884">
    <property type="entry name" value="Malic_enzyme_CS"/>
</dbReference>
<dbReference type="InterPro" id="IPR012301">
    <property type="entry name" value="Malic_N_dom"/>
</dbReference>
<dbReference type="InterPro" id="IPR037062">
    <property type="entry name" value="Malic_N_dom_sf"/>
</dbReference>
<dbReference type="InterPro" id="IPR012302">
    <property type="entry name" value="Malic_NAD-bd"/>
</dbReference>
<dbReference type="InterPro" id="IPR001891">
    <property type="entry name" value="Malic_OxRdtase"/>
</dbReference>
<dbReference type="InterPro" id="IPR036291">
    <property type="entry name" value="NAD(P)-bd_dom_sf"/>
</dbReference>
<dbReference type="InterPro" id="IPR023667">
    <property type="entry name" value="NAD_malic_enz_proteobac"/>
</dbReference>
<dbReference type="NCBIfam" id="NF010052">
    <property type="entry name" value="PRK13529.1"/>
    <property type="match status" value="1"/>
</dbReference>
<dbReference type="PANTHER" id="PTHR23406">
    <property type="entry name" value="MALIC ENZYME-RELATED"/>
    <property type="match status" value="1"/>
</dbReference>
<dbReference type="PANTHER" id="PTHR23406:SF34">
    <property type="entry name" value="NAD-DEPENDENT MALIC ENZYME, MITOCHONDRIAL"/>
    <property type="match status" value="1"/>
</dbReference>
<dbReference type="Pfam" id="PF00390">
    <property type="entry name" value="malic"/>
    <property type="match status" value="1"/>
</dbReference>
<dbReference type="Pfam" id="PF03949">
    <property type="entry name" value="Malic_M"/>
    <property type="match status" value="1"/>
</dbReference>
<dbReference type="PIRSF" id="PIRSF000106">
    <property type="entry name" value="ME"/>
    <property type="match status" value="1"/>
</dbReference>
<dbReference type="PRINTS" id="PR00072">
    <property type="entry name" value="MALOXRDTASE"/>
</dbReference>
<dbReference type="SMART" id="SM01274">
    <property type="entry name" value="malic"/>
    <property type="match status" value="1"/>
</dbReference>
<dbReference type="SMART" id="SM00919">
    <property type="entry name" value="Malic_M"/>
    <property type="match status" value="1"/>
</dbReference>
<dbReference type="SUPFAM" id="SSF53223">
    <property type="entry name" value="Aminoacid dehydrogenase-like, N-terminal domain"/>
    <property type="match status" value="1"/>
</dbReference>
<dbReference type="SUPFAM" id="SSF51735">
    <property type="entry name" value="NAD(P)-binding Rossmann-fold domains"/>
    <property type="match status" value="1"/>
</dbReference>
<dbReference type="PROSITE" id="PS00331">
    <property type="entry name" value="MALIC_ENZYMES"/>
    <property type="match status" value="1"/>
</dbReference>
<proteinExistence type="inferred from homology"/>
<gene>
    <name evidence="1" type="primary">maeA</name>
    <name type="ordered locus">ECS88_1573</name>
</gene>
<feature type="chain" id="PRO_1000185989" description="NAD-dependent malic enzyme">
    <location>
        <begin position="1"/>
        <end position="565"/>
    </location>
</feature>
<feature type="active site" description="Proton donor" evidence="1">
    <location>
        <position position="104"/>
    </location>
</feature>
<feature type="active site" description="Proton acceptor" evidence="1">
    <location>
        <position position="175"/>
    </location>
</feature>
<feature type="binding site" evidence="1">
    <location>
        <position position="157"/>
    </location>
    <ligand>
        <name>NAD(+)</name>
        <dbReference type="ChEBI" id="CHEBI:57540"/>
    </ligand>
</feature>
<feature type="binding site" evidence="1">
    <location>
        <position position="246"/>
    </location>
    <ligand>
        <name>a divalent metal cation</name>
        <dbReference type="ChEBI" id="CHEBI:60240"/>
    </ligand>
</feature>
<feature type="binding site" evidence="1">
    <location>
        <position position="247"/>
    </location>
    <ligand>
        <name>a divalent metal cation</name>
        <dbReference type="ChEBI" id="CHEBI:60240"/>
    </ligand>
</feature>
<feature type="binding site" evidence="1">
    <location>
        <position position="270"/>
    </location>
    <ligand>
        <name>a divalent metal cation</name>
        <dbReference type="ChEBI" id="CHEBI:60240"/>
    </ligand>
</feature>
<feature type="binding site" evidence="1">
    <location>
        <position position="270"/>
    </location>
    <ligand>
        <name>NAD(+)</name>
        <dbReference type="ChEBI" id="CHEBI:57540"/>
    </ligand>
</feature>
<feature type="binding site" evidence="1">
    <location>
        <position position="418"/>
    </location>
    <ligand>
        <name>NAD(+)</name>
        <dbReference type="ChEBI" id="CHEBI:57540"/>
    </ligand>
</feature>
<feature type="site" description="Important for activity" evidence="1">
    <location>
        <position position="270"/>
    </location>
</feature>
<protein>
    <recommendedName>
        <fullName evidence="1">NAD-dependent malic enzyme</fullName>
        <shortName evidence="1">NAD-ME</shortName>
        <ecNumber evidence="1">1.1.1.38</ecNumber>
    </recommendedName>
</protein>
<organism>
    <name type="scientific">Escherichia coli O45:K1 (strain S88 / ExPEC)</name>
    <dbReference type="NCBI Taxonomy" id="585035"/>
    <lineage>
        <taxon>Bacteria</taxon>
        <taxon>Pseudomonadati</taxon>
        <taxon>Pseudomonadota</taxon>
        <taxon>Gammaproteobacteria</taxon>
        <taxon>Enterobacterales</taxon>
        <taxon>Enterobacteriaceae</taxon>
        <taxon>Escherichia</taxon>
    </lineage>
</organism>
<name>MAO1_ECO45</name>
<sequence>MEPKTKKQRSLYIPYAGPVLLEFPLLNKGSAFSMEERRNFNLLGLLPEVVETIEEQAERAWIQYQGFKTEIDKHIYLRNIQDTNETLFYRLVNNHLDEMMPVIYTPTVGAACERFSEIYRRSRGVFISYQNRHNMDDILQNVPNHNIKVIVVTDGERILGLGDQGIGGMGIPIGKLSLYTACGGISPAYTLPVVLDVGTNNQQLLNDPLYMGWRNPRITDDEYYEFVDEFIQAVKQRWPDVLLQFEDFAQKNAMPLLNRYRNEICSFNDDIQGTAAVTVGTLIAASRAAGGQLSEKKIVFLGAGSAGCGIAEMIIAQTQREGLSEEAARQKVFMVDRFGLLTDKMPNLLPFQTKLVQKRENLSDWDTDSDVLSLLDVVRNVKPDILIGVSGQTGLFTEEIIREMHKHCPRPIVMPLSNPTSRVEATPQDIIAWTEGNALVATGSPFNPVVWKDKIYPIAQCNNAFIFPGIGLGVIASGASRITDEMLMSASETLAQYSPLVLNGEGLVLPELKDIQKVSRAIAFAVGKMAQQQGVAVKTSAEALQQAIDDNFWHAEYRDYRRTSI</sequence>
<keyword id="KW-0479">Metal-binding</keyword>
<keyword id="KW-0520">NAD</keyword>
<keyword id="KW-0560">Oxidoreductase</keyword>
<keyword id="KW-1185">Reference proteome</keyword>
<evidence type="ECO:0000255" key="1">
    <source>
        <dbReference type="HAMAP-Rule" id="MF_01619"/>
    </source>
</evidence>
<reference key="1">
    <citation type="journal article" date="2009" name="PLoS Genet.">
        <title>Organised genome dynamics in the Escherichia coli species results in highly diverse adaptive paths.</title>
        <authorList>
            <person name="Touchon M."/>
            <person name="Hoede C."/>
            <person name="Tenaillon O."/>
            <person name="Barbe V."/>
            <person name="Baeriswyl S."/>
            <person name="Bidet P."/>
            <person name="Bingen E."/>
            <person name="Bonacorsi S."/>
            <person name="Bouchier C."/>
            <person name="Bouvet O."/>
            <person name="Calteau A."/>
            <person name="Chiapello H."/>
            <person name="Clermont O."/>
            <person name="Cruveiller S."/>
            <person name="Danchin A."/>
            <person name="Diard M."/>
            <person name="Dossat C."/>
            <person name="Karoui M.E."/>
            <person name="Frapy E."/>
            <person name="Garry L."/>
            <person name="Ghigo J.M."/>
            <person name="Gilles A.M."/>
            <person name="Johnson J."/>
            <person name="Le Bouguenec C."/>
            <person name="Lescat M."/>
            <person name="Mangenot S."/>
            <person name="Martinez-Jehanne V."/>
            <person name="Matic I."/>
            <person name="Nassif X."/>
            <person name="Oztas S."/>
            <person name="Petit M.A."/>
            <person name="Pichon C."/>
            <person name="Rouy Z."/>
            <person name="Ruf C.S."/>
            <person name="Schneider D."/>
            <person name="Tourret J."/>
            <person name="Vacherie B."/>
            <person name="Vallenet D."/>
            <person name="Medigue C."/>
            <person name="Rocha E.P.C."/>
            <person name="Denamur E."/>
        </authorList>
    </citation>
    <scope>NUCLEOTIDE SEQUENCE [LARGE SCALE GENOMIC DNA]</scope>
    <source>
        <strain>S88 / ExPEC</strain>
    </source>
</reference>
<comment type="catalytic activity">
    <reaction evidence="1">
        <text>(S)-malate + NAD(+) = pyruvate + CO2 + NADH</text>
        <dbReference type="Rhea" id="RHEA:12653"/>
        <dbReference type="ChEBI" id="CHEBI:15361"/>
        <dbReference type="ChEBI" id="CHEBI:15589"/>
        <dbReference type="ChEBI" id="CHEBI:16526"/>
        <dbReference type="ChEBI" id="CHEBI:57540"/>
        <dbReference type="ChEBI" id="CHEBI:57945"/>
        <dbReference type="EC" id="1.1.1.38"/>
    </reaction>
</comment>
<comment type="catalytic activity">
    <reaction evidence="1">
        <text>oxaloacetate + H(+) = pyruvate + CO2</text>
        <dbReference type="Rhea" id="RHEA:15641"/>
        <dbReference type="ChEBI" id="CHEBI:15361"/>
        <dbReference type="ChEBI" id="CHEBI:15378"/>
        <dbReference type="ChEBI" id="CHEBI:16452"/>
        <dbReference type="ChEBI" id="CHEBI:16526"/>
        <dbReference type="EC" id="1.1.1.38"/>
    </reaction>
</comment>
<comment type="cofactor">
    <cofactor evidence="1">
        <name>Mg(2+)</name>
        <dbReference type="ChEBI" id="CHEBI:18420"/>
    </cofactor>
    <cofactor evidence="1">
        <name>Mn(2+)</name>
        <dbReference type="ChEBI" id="CHEBI:29035"/>
    </cofactor>
    <text evidence="1">Divalent metal cations. Prefers magnesium or manganese.</text>
</comment>
<comment type="subunit">
    <text evidence="1">Homotetramer.</text>
</comment>
<comment type="similarity">
    <text evidence="1">Belongs to the malic enzymes family.</text>
</comment>